<proteinExistence type="evidence at transcript level"/>
<name>BIP4_TOBAC</name>
<evidence type="ECO:0000255" key="1"/>
<evidence type="ECO:0000255" key="2">
    <source>
        <dbReference type="PROSITE-ProRule" id="PRU10138"/>
    </source>
</evidence>
<evidence type="ECO:0000256" key="3">
    <source>
        <dbReference type="SAM" id="MobiDB-lite"/>
    </source>
</evidence>
<evidence type="ECO:0000305" key="4"/>
<organism>
    <name type="scientific">Nicotiana tabacum</name>
    <name type="common">Common tobacco</name>
    <dbReference type="NCBI Taxonomy" id="4097"/>
    <lineage>
        <taxon>Eukaryota</taxon>
        <taxon>Viridiplantae</taxon>
        <taxon>Streptophyta</taxon>
        <taxon>Embryophyta</taxon>
        <taxon>Tracheophyta</taxon>
        <taxon>Spermatophyta</taxon>
        <taxon>Magnoliopsida</taxon>
        <taxon>eudicotyledons</taxon>
        <taxon>Gunneridae</taxon>
        <taxon>Pentapetalae</taxon>
        <taxon>asterids</taxon>
        <taxon>lamiids</taxon>
        <taxon>Solanales</taxon>
        <taxon>Solanaceae</taxon>
        <taxon>Nicotianoideae</taxon>
        <taxon>Nicotianeae</taxon>
        <taxon>Nicotiana</taxon>
    </lineage>
</organism>
<gene>
    <name type="primary">BIP4</name>
</gene>
<protein>
    <recommendedName>
        <fullName>Luminal-binding protein 4</fullName>
        <shortName>BiP 4</shortName>
    </recommendedName>
    <alternativeName>
        <fullName>78 kDa glucose-regulated protein homolog 4</fullName>
        <shortName>GRP-78-4</shortName>
    </alternativeName>
</protein>
<accession>Q03684</accession>
<comment type="function">
    <text>Probably plays a role in facilitating the assembly of multimeric protein complexes inside the ER.</text>
</comment>
<comment type="subcellular location">
    <subcellularLocation>
        <location>Endoplasmic reticulum lumen</location>
    </subcellularLocation>
</comment>
<comment type="similarity">
    <text evidence="4">Belongs to the heat shock protein 70 family.</text>
</comment>
<feature type="signal peptide" evidence="1">
    <location>
        <begin position="1"/>
        <end position="25"/>
    </location>
</feature>
<feature type="chain" id="PRO_0000013594" description="Luminal-binding protein 4">
    <location>
        <begin position="26"/>
        <end position="667"/>
    </location>
</feature>
<feature type="region of interest" description="Disordered" evidence="3">
    <location>
        <begin position="644"/>
        <end position="667"/>
    </location>
</feature>
<feature type="short sequence motif" description="Prevents secretion from ER" evidence="2">
    <location>
        <begin position="664"/>
        <end position="667"/>
    </location>
</feature>
<feature type="compositionally biased region" description="Acidic residues" evidence="3">
    <location>
        <begin position="658"/>
        <end position="667"/>
    </location>
</feature>
<feature type="glycosylation site" description="N-linked (GlcNAc...) asparagine" evidence="1">
    <location>
        <position position="618"/>
    </location>
</feature>
<sequence>MAGGAWNRRTSLIVFGIVLFGCLFAFSIATEEATKLGTVIGIDLGTTYSCVGVYKNGHVEIIANDQGNRITPSWVAFTDGERLIGEAAKNLAAVNPERTVFDVKRLIGRKFDDKEVQRDMKLVPYKIVNKDGKPYIQVKIKDGETKIFSPEEISAMILTKMKETAEAYLGKKIKDAVVTVPAYFNDAQRQATKDAGVIAGLNVARIINEPTAAAIAYGLDKKGGEKNILVFDLGGGTFDVSILTIDNGVFEVLSTNGDTHLGGEDFDQRIMEYFIKLIKKKHGKDISKDNRALGKLRREAERAKRALSSQHQVRVEIESLFDGVDFSEPLTRARFEELNNDLFRKTMGPVKKAMDDAGLEKTQIDEIVLVGGSTRIPKVQQLLKDYFDGKEPNKGVNPDEAVAYGAAVQGGILSGEGGDETKDILLLDVAPLTLGIETVGGVMTKLIPRNTVIPTKKSQVFTTYQDQQTTVTIQVFEGERSLTKDCRLLGKFDLTGIAPAPRGTPQIEVTFEVDANGILNVKAEDKASGKSEKITITNDKGRLSQEEIERMVKEAEEFAEEDKKVKERIDARNSLETYVYNMRNQINDKDKLADKLESDEKEKIETATKEALEWLDDNQSAEKEDYEEKLKEVEAVCNPIITAVYQKSGGAPGGESGASEDDDHDEL</sequence>
<reference key="1">
    <citation type="journal article" date="1991" name="Plant Cell">
        <title>The tobacco luminal binding protein is encoded by a multigene family.</title>
        <authorList>
            <person name="Denecke J."/>
            <person name="Goldman M.H."/>
            <person name="Demolder J."/>
            <person name="Seurinck J."/>
            <person name="Botterman J."/>
        </authorList>
    </citation>
    <scope>NUCLEOTIDE SEQUENCE [MRNA]</scope>
</reference>
<reference key="2">
    <citation type="journal article" date="1991" name="Plant Cell">
        <authorList>
            <person name="Denecke J."/>
            <person name="Goldman M.H."/>
            <person name="Demolder J."/>
            <person name="Seurinck J."/>
            <person name="Botterman J."/>
        </authorList>
    </citation>
    <scope>ERRATUM OF PUBMED:1822990</scope>
</reference>
<keyword id="KW-0067">ATP-binding</keyword>
<keyword id="KW-0256">Endoplasmic reticulum</keyword>
<keyword id="KW-0325">Glycoprotein</keyword>
<keyword id="KW-0547">Nucleotide-binding</keyword>
<keyword id="KW-1185">Reference proteome</keyword>
<keyword id="KW-0732">Signal</keyword>
<dbReference type="EMBL" id="X60057">
    <property type="protein sequence ID" value="CAA42659.1"/>
    <property type="molecule type" value="mRNA"/>
</dbReference>
<dbReference type="PIR" id="JQ1360">
    <property type="entry name" value="S21879"/>
</dbReference>
<dbReference type="RefSeq" id="NP_001312963.1">
    <property type="nucleotide sequence ID" value="NM_001326034.1"/>
</dbReference>
<dbReference type="SMR" id="Q03684"/>
<dbReference type="STRING" id="4097.Q03684"/>
<dbReference type="GlyCosmos" id="Q03684">
    <property type="glycosylation" value="1 site, No reported glycans"/>
</dbReference>
<dbReference type="PaxDb" id="4097-Q03684"/>
<dbReference type="ProMEX" id="Q03684"/>
<dbReference type="GeneID" id="107818867"/>
<dbReference type="KEGG" id="nta:107818867"/>
<dbReference type="OrthoDB" id="2401965at2759"/>
<dbReference type="Proteomes" id="UP000084051">
    <property type="component" value="Unplaced"/>
</dbReference>
<dbReference type="GO" id="GO:0005737">
    <property type="term" value="C:cytoplasm"/>
    <property type="evidence" value="ECO:0000318"/>
    <property type="project" value="GO_Central"/>
</dbReference>
<dbReference type="GO" id="GO:0034663">
    <property type="term" value="C:endoplasmic reticulum chaperone complex"/>
    <property type="evidence" value="ECO:0000318"/>
    <property type="project" value="GO_Central"/>
</dbReference>
<dbReference type="GO" id="GO:0005788">
    <property type="term" value="C:endoplasmic reticulum lumen"/>
    <property type="evidence" value="ECO:0000318"/>
    <property type="project" value="GO_Central"/>
</dbReference>
<dbReference type="GO" id="GO:0016020">
    <property type="term" value="C:membrane"/>
    <property type="evidence" value="ECO:0000318"/>
    <property type="project" value="GO_Central"/>
</dbReference>
<dbReference type="GO" id="GO:0005634">
    <property type="term" value="C:nucleus"/>
    <property type="evidence" value="ECO:0000318"/>
    <property type="project" value="GO_Central"/>
</dbReference>
<dbReference type="GO" id="GO:0005524">
    <property type="term" value="F:ATP binding"/>
    <property type="evidence" value="ECO:0007669"/>
    <property type="project" value="UniProtKB-KW"/>
</dbReference>
<dbReference type="GO" id="GO:0016887">
    <property type="term" value="F:ATP hydrolysis activity"/>
    <property type="evidence" value="ECO:0000318"/>
    <property type="project" value="GO_Central"/>
</dbReference>
<dbReference type="GO" id="GO:0140662">
    <property type="term" value="F:ATP-dependent protein folding chaperone"/>
    <property type="evidence" value="ECO:0007669"/>
    <property type="project" value="InterPro"/>
</dbReference>
<dbReference type="GO" id="GO:0031072">
    <property type="term" value="F:heat shock protein binding"/>
    <property type="evidence" value="ECO:0000318"/>
    <property type="project" value="GO_Central"/>
</dbReference>
<dbReference type="GO" id="GO:0044183">
    <property type="term" value="F:protein folding chaperone"/>
    <property type="evidence" value="ECO:0000318"/>
    <property type="project" value="GO_Central"/>
</dbReference>
<dbReference type="GO" id="GO:0051085">
    <property type="term" value="P:chaperone cofactor-dependent protein refolding"/>
    <property type="evidence" value="ECO:0000318"/>
    <property type="project" value="GO_Central"/>
</dbReference>
<dbReference type="GO" id="GO:0030968">
    <property type="term" value="P:endoplasmic reticulum unfolded protein response"/>
    <property type="evidence" value="ECO:0000318"/>
    <property type="project" value="GO_Central"/>
</dbReference>
<dbReference type="GO" id="GO:0036503">
    <property type="term" value="P:ERAD pathway"/>
    <property type="evidence" value="ECO:0000318"/>
    <property type="project" value="GO_Central"/>
</dbReference>
<dbReference type="GO" id="GO:0042026">
    <property type="term" value="P:protein refolding"/>
    <property type="evidence" value="ECO:0000318"/>
    <property type="project" value="GO_Central"/>
</dbReference>
<dbReference type="CDD" id="cd10241">
    <property type="entry name" value="ASKHA_NBD_HSP70_BiP"/>
    <property type="match status" value="1"/>
</dbReference>
<dbReference type="FunFam" id="3.90.640.10:FF:000153">
    <property type="entry name" value="Endoplasmic reticulum chaperone BiP"/>
    <property type="match status" value="1"/>
</dbReference>
<dbReference type="FunFam" id="2.60.34.10:FF:000002">
    <property type="entry name" value="Heat shock 70 kDa"/>
    <property type="match status" value="1"/>
</dbReference>
<dbReference type="FunFam" id="3.30.420.40:FF:000026">
    <property type="entry name" value="Heat shock protein 70"/>
    <property type="match status" value="1"/>
</dbReference>
<dbReference type="FunFam" id="3.30.30.30:FF:000005">
    <property type="entry name" value="Heat shock protein ssb1"/>
    <property type="match status" value="1"/>
</dbReference>
<dbReference type="FunFam" id="1.20.1270.10:FF:000015">
    <property type="entry name" value="Luminal-binding protein 5"/>
    <property type="match status" value="1"/>
</dbReference>
<dbReference type="Gene3D" id="1.20.1270.10">
    <property type="match status" value="1"/>
</dbReference>
<dbReference type="Gene3D" id="3.30.420.40">
    <property type="match status" value="2"/>
</dbReference>
<dbReference type="Gene3D" id="3.90.640.10">
    <property type="entry name" value="Actin, Chain A, domain 4"/>
    <property type="match status" value="1"/>
</dbReference>
<dbReference type="Gene3D" id="2.60.34.10">
    <property type="entry name" value="Substrate Binding Domain Of DNAk, Chain A, domain 1"/>
    <property type="match status" value="1"/>
</dbReference>
<dbReference type="InterPro" id="IPR043129">
    <property type="entry name" value="ATPase_NBD"/>
</dbReference>
<dbReference type="InterPro" id="IPR042050">
    <property type="entry name" value="BIP_NBD"/>
</dbReference>
<dbReference type="InterPro" id="IPR018181">
    <property type="entry name" value="Heat_shock_70_CS"/>
</dbReference>
<dbReference type="InterPro" id="IPR029048">
    <property type="entry name" value="HSP70_C_sf"/>
</dbReference>
<dbReference type="InterPro" id="IPR029047">
    <property type="entry name" value="HSP70_peptide-bd_sf"/>
</dbReference>
<dbReference type="InterPro" id="IPR013126">
    <property type="entry name" value="Hsp_70_fam"/>
</dbReference>
<dbReference type="NCBIfam" id="NF001413">
    <property type="entry name" value="PRK00290.1"/>
    <property type="match status" value="1"/>
</dbReference>
<dbReference type="PANTHER" id="PTHR19375">
    <property type="entry name" value="HEAT SHOCK PROTEIN 70KDA"/>
    <property type="match status" value="1"/>
</dbReference>
<dbReference type="Pfam" id="PF00012">
    <property type="entry name" value="HSP70"/>
    <property type="match status" value="1"/>
</dbReference>
<dbReference type="PRINTS" id="PR00301">
    <property type="entry name" value="HEATSHOCK70"/>
</dbReference>
<dbReference type="SUPFAM" id="SSF53067">
    <property type="entry name" value="Actin-like ATPase domain"/>
    <property type="match status" value="2"/>
</dbReference>
<dbReference type="SUPFAM" id="SSF100934">
    <property type="entry name" value="Heat shock protein 70kD (HSP70), C-terminal subdomain"/>
    <property type="match status" value="1"/>
</dbReference>
<dbReference type="SUPFAM" id="SSF100920">
    <property type="entry name" value="Heat shock protein 70kD (HSP70), peptide-binding domain"/>
    <property type="match status" value="1"/>
</dbReference>
<dbReference type="PROSITE" id="PS00014">
    <property type="entry name" value="ER_TARGET"/>
    <property type="match status" value="1"/>
</dbReference>
<dbReference type="PROSITE" id="PS00297">
    <property type="entry name" value="HSP70_1"/>
    <property type="match status" value="1"/>
</dbReference>
<dbReference type="PROSITE" id="PS00329">
    <property type="entry name" value="HSP70_2"/>
    <property type="match status" value="1"/>
</dbReference>
<dbReference type="PROSITE" id="PS01036">
    <property type="entry name" value="HSP70_3"/>
    <property type="match status" value="1"/>
</dbReference>